<evidence type="ECO:0000250" key="1">
    <source>
        <dbReference type="UniProtKB" id="P38013"/>
    </source>
</evidence>
<evidence type="ECO:0000255" key="2">
    <source>
        <dbReference type="PROSITE-ProRule" id="PRU00691"/>
    </source>
</evidence>
<evidence type="ECO:0000269" key="3">
    <source>
    </source>
</evidence>
<evidence type="ECO:0000269" key="4">
    <source>
    </source>
</evidence>
<evidence type="ECO:0000303" key="5">
    <source>
    </source>
</evidence>
<evidence type="ECO:0000305" key="6"/>
<evidence type="ECO:0000305" key="7">
    <source>
    </source>
</evidence>
<evidence type="ECO:0000312" key="8">
    <source>
        <dbReference type="PomBase" id="SPCC330.06c"/>
    </source>
</evidence>
<keyword id="KW-0049">Antioxidant</keyword>
<keyword id="KW-0963">Cytoplasm</keyword>
<keyword id="KW-1015">Disulfide bond</keyword>
<keyword id="KW-0539">Nucleus</keyword>
<keyword id="KW-0560">Oxidoreductase</keyword>
<keyword id="KW-0575">Peroxidase</keyword>
<keyword id="KW-0676">Redox-active center</keyword>
<keyword id="KW-1185">Reference proteome</keyword>
<reference key="1">
    <citation type="submission" date="1997-10" db="EMBL/GenBank/DDBJ databases">
        <authorList>
            <person name="Lenaers G."/>
            <person name="Perret E."/>
            <person name="Delpech B."/>
            <person name="Picard A."/>
            <person name="Caput D."/>
        </authorList>
    </citation>
    <scope>NUCLEOTIDE SEQUENCE [MRNA]</scope>
    <source>
        <strain>972 / ATCC 24843</strain>
    </source>
</reference>
<reference key="2">
    <citation type="journal article" date="2002" name="Nature">
        <title>The genome sequence of Schizosaccharomyces pombe.</title>
        <authorList>
            <person name="Wood V."/>
            <person name="Gwilliam R."/>
            <person name="Rajandream M.A."/>
            <person name="Lyne M.H."/>
            <person name="Lyne R."/>
            <person name="Stewart A."/>
            <person name="Sgouros J.G."/>
            <person name="Peat N."/>
            <person name="Hayles J."/>
            <person name="Baker S.G."/>
            <person name="Basham D."/>
            <person name="Bowman S."/>
            <person name="Brooks K."/>
            <person name="Brown D."/>
            <person name="Brown S."/>
            <person name="Chillingworth T."/>
            <person name="Churcher C.M."/>
            <person name="Collins M."/>
            <person name="Connor R."/>
            <person name="Cronin A."/>
            <person name="Davis P."/>
            <person name="Feltwell T."/>
            <person name="Fraser A."/>
            <person name="Gentles S."/>
            <person name="Goble A."/>
            <person name="Hamlin N."/>
            <person name="Harris D.E."/>
            <person name="Hidalgo J."/>
            <person name="Hodgson G."/>
            <person name="Holroyd S."/>
            <person name="Hornsby T."/>
            <person name="Howarth S."/>
            <person name="Huckle E.J."/>
            <person name="Hunt S."/>
            <person name="Jagels K."/>
            <person name="James K.D."/>
            <person name="Jones L."/>
            <person name="Jones M."/>
            <person name="Leather S."/>
            <person name="McDonald S."/>
            <person name="McLean J."/>
            <person name="Mooney P."/>
            <person name="Moule S."/>
            <person name="Mungall K.L."/>
            <person name="Murphy L.D."/>
            <person name="Niblett D."/>
            <person name="Odell C."/>
            <person name="Oliver K."/>
            <person name="O'Neil S."/>
            <person name="Pearson D."/>
            <person name="Quail M.A."/>
            <person name="Rabbinowitsch E."/>
            <person name="Rutherford K.M."/>
            <person name="Rutter S."/>
            <person name="Saunders D."/>
            <person name="Seeger K."/>
            <person name="Sharp S."/>
            <person name="Skelton J."/>
            <person name="Simmonds M.N."/>
            <person name="Squares R."/>
            <person name="Squares S."/>
            <person name="Stevens K."/>
            <person name="Taylor K."/>
            <person name="Taylor R.G."/>
            <person name="Tivey A."/>
            <person name="Walsh S.V."/>
            <person name="Warren T."/>
            <person name="Whitehead S."/>
            <person name="Woodward J.R."/>
            <person name="Volckaert G."/>
            <person name="Aert R."/>
            <person name="Robben J."/>
            <person name="Grymonprez B."/>
            <person name="Weltjens I."/>
            <person name="Vanstreels E."/>
            <person name="Rieger M."/>
            <person name="Schaefer M."/>
            <person name="Mueller-Auer S."/>
            <person name="Gabel C."/>
            <person name="Fuchs M."/>
            <person name="Duesterhoeft A."/>
            <person name="Fritzc C."/>
            <person name="Holzer E."/>
            <person name="Moestl D."/>
            <person name="Hilbert H."/>
            <person name="Borzym K."/>
            <person name="Langer I."/>
            <person name="Beck A."/>
            <person name="Lehrach H."/>
            <person name="Reinhardt R."/>
            <person name="Pohl T.M."/>
            <person name="Eger P."/>
            <person name="Zimmermann W."/>
            <person name="Wedler H."/>
            <person name="Wambutt R."/>
            <person name="Purnelle B."/>
            <person name="Goffeau A."/>
            <person name="Cadieu E."/>
            <person name="Dreano S."/>
            <person name="Gloux S."/>
            <person name="Lelaure V."/>
            <person name="Mottier S."/>
            <person name="Galibert F."/>
            <person name="Aves S.J."/>
            <person name="Xiang Z."/>
            <person name="Hunt C."/>
            <person name="Moore K."/>
            <person name="Hurst S.M."/>
            <person name="Lucas M."/>
            <person name="Rochet M."/>
            <person name="Gaillardin C."/>
            <person name="Tallada V.A."/>
            <person name="Garzon A."/>
            <person name="Thode G."/>
            <person name="Daga R.R."/>
            <person name="Cruzado L."/>
            <person name="Jimenez J."/>
            <person name="Sanchez M."/>
            <person name="del Rey F."/>
            <person name="Benito J."/>
            <person name="Dominguez A."/>
            <person name="Revuelta J.L."/>
            <person name="Moreno S."/>
            <person name="Armstrong J."/>
            <person name="Forsburg S.L."/>
            <person name="Cerutti L."/>
            <person name="Lowe T."/>
            <person name="McCombie W.R."/>
            <person name="Paulsen I."/>
            <person name="Potashkin J."/>
            <person name="Shpakovski G.V."/>
            <person name="Ussery D."/>
            <person name="Barrell B.G."/>
            <person name="Nurse P."/>
        </authorList>
    </citation>
    <scope>NUCLEOTIDE SEQUENCE [LARGE SCALE GENOMIC DNA]</scope>
    <source>
        <strain>972 / ATCC 24843</strain>
    </source>
</reference>
<reference key="3">
    <citation type="journal article" date="2006" name="Nat. Biotechnol.">
        <title>ORFeome cloning and global analysis of protein localization in the fission yeast Schizosaccharomyces pombe.</title>
        <authorList>
            <person name="Matsuyama A."/>
            <person name="Arai R."/>
            <person name="Yashiroda Y."/>
            <person name="Shirai A."/>
            <person name="Kamata A."/>
            <person name="Sekido S."/>
            <person name="Kobayashi Y."/>
            <person name="Hashimoto A."/>
            <person name="Hamamoto M."/>
            <person name="Hiraoka Y."/>
            <person name="Horinouchi S."/>
            <person name="Yoshida M."/>
        </authorList>
    </citation>
    <scope>SUBCELLULAR LOCATION [LARGE SCALE ANALYSIS]</scope>
</reference>
<reference key="4">
    <citation type="journal article" date="2010" name="BMB Rep.">
        <title>Distinct functional roles of peroxiredoxin isozymes and glutathione peroxidase from fission yeast, Schizosaccharomyces pombe.</title>
        <authorList>
            <person name="Kim J.S."/>
            <person name="Bang M.A."/>
            <person name="Lee S."/>
            <person name="Chae H.Z."/>
            <person name="Kim K."/>
        </authorList>
    </citation>
    <scope>FUNCTION</scope>
    <scope>LACK OF CATALYTIC ACTIVITY</scope>
    <scope>SUBUNIT</scope>
</reference>
<name>PMP20_SCHPO</name>
<gene>
    <name evidence="5" type="primary">pmp20</name>
    <name evidence="8" type="ORF">SPCC330.06c</name>
</gene>
<protein>
    <recommendedName>
        <fullName>Peroxisomal membrane associated protein 20</fullName>
    </recommendedName>
    <alternativeName>
        <fullName evidence="5">Peroxiredoxin homolog pmp20</fullName>
        <shortName evidence="5">Prx</shortName>
    </alternativeName>
</protein>
<sequence>MVAVGSTLPKVTLWENKPEEVVEFPSQGKFIIVGVPGAFTPPCSSQVPGYIANEKQFAAKGISGIYVVAVNDVFVTKAWKKSFDGGEQSGVHFVADWNGEFTKAFDAGFDASGLLGPLRSKRYAAVVENGKVVKVFIENEVTDVDISSADKVLSSL</sequence>
<dbReference type="EMBL" id="AJ002536">
    <property type="protein sequence ID" value="CAA05528.1"/>
    <property type="molecule type" value="mRNA"/>
</dbReference>
<dbReference type="EMBL" id="CU329672">
    <property type="protein sequence ID" value="CAA20911.1"/>
    <property type="molecule type" value="Genomic_DNA"/>
</dbReference>
<dbReference type="PIR" id="T41316">
    <property type="entry name" value="T41316"/>
</dbReference>
<dbReference type="RefSeq" id="NP_587706.1">
    <property type="nucleotide sequence ID" value="NM_001022701.2"/>
</dbReference>
<dbReference type="SMR" id="O14313"/>
<dbReference type="BioGRID" id="275555">
    <property type="interactions" value="11"/>
</dbReference>
<dbReference type="FunCoup" id="O14313">
    <property type="interactions" value="225"/>
</dbReference>
<dbReference type="STRING" id="284812.O14313"/>
<dbReference type="iPTMnet" id="O14313"/>
<dbReference type="PaxDb" id="4896-SPCC330.06c.1"/>
<dbReference type="EnsemblFungi" id="SPCC330.06c.1">
    <property type="protein sequence ID" value="SPCC330.06c.1:pep"/>
    <property type="gene ID" value="SPCC330.06c"/>
</dbReference>
<dbReference type="GeneID" id="2538981"/>
<dbReference type="KEGG" id="spo:2538981"/>
<dbReference type="PomBase" id="SPCC330.06c">
    <property type="gene designation" value="pmp20"/>
</dbReference>
<dbReference type="VEuPathDB" id="FungiDB:SPCC330.06c"/>
<dbReference type="eggNOG" id="KOG0541">
    <property type="taxonomic scope" value="Eukaryota"/>
</dbReference>
<dbReference type="HOGENOM" id="CLU_072440_3_0_1"/>
<dbReference type="InParanoid" id="O14313"/>
<dbReference type="OMA" id="ACLLCIK"/>
<dbReference type="PhylomeDB" id="O14313"/>
<dbReference type="Reactome" id="R-SPO-3299685">
    <property type="pathway name" value="Detoxification of Reactive Oxygen Species"/>
</dbReference>
<dbReference type="Reactome" id="R-SPO-5628897">
    <property type="pathway name" value="TP53 Regulates Metabolic Genes"/>
</dbReference>
<dbReference type="PRO" id="PR:O14313"/>
<dbReference type="Proteomes" id="UP000002485">
    <property type="component" value="Chromosome III"/>
</dbReference>
<dbReference type="GO" id="GO:0005737">
    <property type="term" value="C:cytoplasm"/>
    <property type="evidence" value="ECO:0000318"/>
    <property type="project" value="GO_Central"/>
</dbReference>
<dbReference type="GO" id="GO:0005829">
    <property type="term" value="C:cytosol"/>
    <property type="evidence" value="ECO:0007005"/>
    <property type="project" value="PomBase"/>
</dbReference>
<dbReference type="GO" id="GO:0005739">
    <property type="term" value="C:mitochondrion"/>
    <property type="evidence" value="ECO:0000318"/>
    <property type="project" value="GO_Central"/>
</dbReference>
<dbReference type="GO" id="GO:0005634">
    <property type="term" value="C:nucleus"/>
    <property type="evidence" value="ECO:0007005"/>
    <property type="project" value="PomBase"/>
</dbReference>
<dbReference type="GO" id="GO:0005777">
    <property type="term" value="C:peroxisome"/>
    <property type="evidence" value="ECO:0000318"/>
    <property type="project" value="GO_Central"/>
</dbReference>
<dbReference type="GO" id="GO:0004601">
    <property type="term" value="F:peroxidase activity"/>
    <property type="evidence" value="ECO:0007669"/>
    <property type="project" value="UniProtKB-KW"/>
</dbReference>
<dbReference type="GO" id="GO:0051082">
    <property type="term" value="F:unfolded protein binding"/>
    <property type="evidence" value="ECO:0000314"/>
    <property type="project" value="PomBase"/>
</dbReference>
<dbReference type="GO" id="GO:0045454">
    <property type="term" value="P:cell redox homeostasis"/>
    <property type="evidence" value="ECO:0000318"/>
    <property type="project" value="GO_Central"/>
</dbReference>
<dbReference type="GO" id="GO:0034599">
    <property type="term" value="P:cellular response to oxidative stress"/>
    <property type="evidence" value="ECO:0000318"/>
    <property type="project" value="GO_Central"/>
</dbReference>
<dbReference type="GO" id="GO:0042744">
    <property type="term" value="P:hydrogen peroxide catabolic process"/>
    <property type="evidence" value="ECO:0000318"/>
    <property type="project" value="GO_Central"/>
</dbReference>
<dbReference type="GO" id="GO:0042026">
    <property type="term" value="P:protein refolding"/>
    <property type="evidence" value="ECO:0000305"/>
    <property type="project" value="PomBase"/>
</dbReference>
<dbReference type="CDD" id="cd03013">
    <property type="entry name" value="PRX5_like"/>
    <property type="match status" value="1"/>
</dbReference>
<dbReference type="FunFam" id="3.40.30.10:FF:000159">
    <property type="entry name" value="Peroxiredoxin"/>
    <property type="match status" value="1"/>
</dbReference>
<dbReference type="Gene3D" id="3.40.30.10">
    <property type="entry name" value="Glutaredoxin"/>
    <property type="match status" value="1"/>
</dbReference>
<dbReference type="InterPro" id="IPR037944">
    <property type="entry name" value="PRX5-like"/>
</dbReference>
<dbReference type="InterPro" id="IPR013740">
    <property type="entry name" value="Redoxin"/>
</dbReference>
<dbReference type="InterPro" id="IPR036249">
    <property type="entry name" value="Thioredoxin-like_sf"/>
</dbReference>
<dbReference type="InterPro" id="IPR013766">
    <property type="entry name" value="Thioredoxin_domain"/>
</dbReference>
<dbReference type="PANTHER" id="PTHR10430">
    <property type="entry name" value="PEROXIREDOXIN"/>
    <property type="match status" value="1"/>
</dbReference>
<dbReference type="PANTHER" id="PTHR10430:SF39">
    <property type="entry name" value="PEROXISOMAL MEMBRANE ASSOCIATED PROTEIN 20"/>
    <property type="match status" value="1"/>
</dbReference>
<dbReference type="Pfam" id="PF08534">
    <property type="entry name" value="Redoxin"/>
    <property type="match status" value="1"/>
</dbReference>
<dbReference type="SUPFAM" id="SSF52833">
    <property type="entry name" value="Thioredoxin-like"/>
    <property type="match status" value="1"/>
</dbReference>
<dbReference type="PROSITE" id="PS51352">
    <property type="entry name" value="THIOREDOXIN_2"/>
    <property type="match status" value="1"/>
</dbReference>
<feature type="chain" id="PRO_0000056609" description="Peroxisomal membrane associated protein 20">
    <location>
        <begin position="1"/>
        <end position="156"/>
    </location>
</feature>
<feature type="domain" description="Thioredoxin" evidence="2">
    <location>
        <begin position="2"/>
        <end position="156"/>
    </location>
</feature>
<feature type="active site" description="Cysteine sulfenic acid (-SOH) intermediate" evidence="1">
    <location>
        <position position="43"/>
    </location>
</feature>
<feature type="disulfide bond" description="Interchain; in linked form" evidence="4">
    <location>
        <position position="43"/>
    </location>
</feature>
<feature type="sequence conflict" description="In Ref. 1; CAA05528." evidence="6" ref="1">
    <original>E</original>
    <variation>K</variation>
    <location>
        <position position="20"/>
    </location>
</feature>
<accession>O14313</accession>
<accession>O74877</accession>
<proteinExistence type="evidence at protein level"/>
<organism>
    <name type="scientific">Schizosaccharomyces pombe (strain 972 / ATCC 24843)</name>
    <name type="common">Fission yeast</name>
    <dbReference type="NCBI Taxonomy" id="284812"/>
    <lineage>
        <taxon>Eukaryota</taxon>
        <taxon>Fungi</taxon>
        <taxon>Dikarya</taxon>
        <taxon>Ascomycota</taxon>
        <taxon>Taphrinomycotina</taxon>
        <taxon>Schizosaccharomycetes</taxon>
        <taxon>Schizosaccharomycetales</taxon>
        <taxon>Schizosaccharomycetaceae</taxon>
        <taxon>Schizosaccharomyces</taxon>
    </lineage>
</organism>
<comment type="function">
    <text evidence="4">May act as a chaperone rather than a peroxidase. Has no thioredoxin-dependent peroxidase activity. Shows weak chaperone activity.</text>
</comment>
<comment type="subunit">
    <text evidence="4">Homodimer; disulfide-linked, upon oxidation.</text>
</comment>
<comment type="subcellular location">
    <subcellularLocation>
        <location evidence="3">Cytoplasm</location>
    </subcellularLocation>
    <subcellularLocation>
        <location evidence="3">Nucleus</location>
    </subcellularLocation>
</comment>
<comment type="miscellaneous">
    <text evidence="7">The active site is a conserved redox-active cysteine residue, the peroxidatic cysteine (C(P)), which makes the nucleophilic attack on the peroxide substrate. The peroxide oxidizes the C(P)-SH to cysteine sulfenic acid (C(P)-SOH), which then reacts with another cysteine residue, the resolving cysteine (C(R)), to form a disulfide bridge. The disulfide is subsequently reduced by an appropriate electron donor to complete the catalytic cycle. In the typical 2-Cys Prx5 family, C(R) is provided by the other dimeric subunit to form an intersubunit disulfide. Pmp20 lacks the resolving cysteine residue.</text>
</comment>
<comment type="similarity">
    <text evidence="6">Belongs to the peroxiredoxin family. Prx5 subfamily.</text>
</comment>